<sequence>MNALKERKEAFVSGLEGGSIAEINLVTTVALTAYFGWQLLNRRLDSVPLVVDFLLNWAGLLLSITVYANDPVLLNLLIAVPCIVQLQILGRSSQRKTQPQKGKESARLGLDRKPFITAYRGGMLIITCLAILAVDFPVFPRRFAKVETWGTSLMDLGVGSFVFSNGLVAASALLKQEISGQRPPLWSRLVSSVRSAGILLALGVARLVSVKGLEYQEHVTEYGTSWNFFFTLALVPLAMILVDPICTYVPRVFIALLLSVFSEYLLQKEGFLQFMIMSKRDNFFNSNREGILSFLGYCAIFLLGQNTGFYVLGNRPTVNNLYRPSGQSWQQNRRQRLSAWDKWTSVTPLAGLLAWFFITVALFQLTMAYHPYTVSRRFANLPYVLWVAAYNLGFLSMYCMVDSLFNLSQHSNNVPVTLDAVNSNGLFVFLLANCLTGLINMNMNTLDSTLTVQIAALFGYATVIASVAIIMYKCRIFIKL</sequence>
<gene>
    <name type="primary">GWT1</name>
    <name type="ordered locus">AFR094C</name>
</gene>
<keyword id="KW-0012">Acyltransferase</keyword>
<keyword id="KW-0256">Endoplasmic reticulum</keyword>
<keyword id="KW-0325">Glycoprotein</keyword>
<keyword id="KW-0337">GPI-anchor biosynthesis</keyword>
<keyword id="KW-0472">Membrane</keyword>
<keyword id="KW-1185">Reference proteome</keyword>
<keyword id="KW-0808">Transferase</keyword>
<keyword id="KW-0812">Transmembrane</keyword>
<keyword id="KW-1133">Transmembrane helix</keyword>
<comment type="function">
    <text evidence="1">Probable acetyltransferase, which acetylates the inositol ring of phosphatidylinositol during biosynthesis of GPI-anchor.</text>
</comment>
<comment type="pathway">
    <text>Glycolipid biosynthesis; glycosylphosphatidylinositol-anchor biosynthesis.</text>
</comment>
<comment type="subcellular location">
    <subcellularLocation>
        <location evidence="1">Endoplasmic reticulum membrane</location>
        <topology evidence="1">Multi-pass membrane protein</topology>
    </subcellularLocation>
</comment>
<comment type="similarity">
    <text evidence="3">Belongs to the PIGW family.</text>
</comment>
<accession>Q754I2</accession>
<proteinExistence type="inferred from homology"/>
<name>GWT1_EREGS</name>
<feature type="chain" id="PRO_0000246285" description="GPI-anchored wall transfer protein 1">
    <location>
        <begin position="1"/>
        <end position="480"/>
    </location>
</feature>
<feature type="transmembrane region" description="Helical" evidence="2">
    <location>
        <begin position="20"/>
        <end position="40"/>
    </location>
</feature>
<feature type="transmembrane region" description="Helical" evidence="2">
    <location>
        <begin position="47"/>
        <end position="67"/>
    </location>
</feature>
<feature type="transmembrane region" description="Helical" evidence="2">
    <location>
        <begin position="70"/>
        <end position="90"/>
    </location>
</feature>
<feature type="transmembrane region" description="Helical" evidence="2">
    <location>
        <begin position="114"/>
        <end position="134"/>
    </location>
</feature>
<feature type="transmembrane region" description="Helical" evidence="2">
    <location>
        <begin position="153"/>
        <end position="173"/>
    </location>
</feature>
<feature type="transmembrane region" description="Helical" evidence="2">
    <location>
        <begin position="186"/>
        <end position="208"/>
    </location>
</feature>
<feature type="transmembrane region" description="Helical" evidence="2">
    <location>
        <begin position="228"/>
        <end position="248"/>
    </location>
</feature>
<feature type="transmembrane region" description="Helical" evidence="2">
    <location>
        <begin position="252"/>
        <end position="272"/>
    </location>
</feature>
<feature type="transmembrane region" description="Helical" evidence="2">
    <location>
        <begin position="291"/>
        <end position="311"/>
    </location>
</feature>
<feature type="transmembrane region" description="Helical" evidence="2">
    <location>
        <begin position="343"/>
        <end position="363"/>
    </location>
</feature>
<feature type="transmembrane region" description="Helical" evidence="2">
    <location>
        <begin position="381"/>
        <end position="401"/>
    </location>
</feature>
<feature type="transmembrane region" description="Helical" evidence="2">
    <location>
        <begin position="426"/>
        <end position="446"/>
    </location>
</feature>
<feature type="transmembrane region" description="Helical" evidence="2">
    <location>
        <begin position="450"/>
        <end position="470"/>
    </location>
</feature>
<feature type="glycosylation site" description="N-linked (GlcNAc...) asparagine" evidence="2">
    <location>
        <position position="406"/>
    </location>
</feature>
<reference key="1">
    <citation type="journal article" date="2004" name="Science">
        <title>The Ashbya gossypii genome as a tool for mapping the ancient Saccharomyces cerevisiae genome.</title>
        <authorList>
            <person name="Dietrich F.S."/>
            <person name="Voegeli S."/>
            <person name="Brachat S."/>
            <person name="Lerch A."/>
            <person name="Gates K."/>
            <person name="Steiner S."/>
            <person name="Mohr C."/>
            <person name="Poehlmann R."/>
            <person name="Luedi P."/>
            <person name="Choi S."/>
            <person name="Wing R.A."/>
            <person name="Flavier A."/>
            <person name="Gaffney T.D."/>
            <person name="Philippsen P."/>
        </authorList>
    </citation>
    <scope>NUCLEOTIDE SEQUENCE [LARGE SCALE GENOMIC DNA]</scope>
    <source>
        <strain>ATCC 10895 / CBS 109.51 / FGSC 9923 / NRRL Y-1056</strain>
    </source>
</reference>
<reference key="2">
    <citation type="journal article" date="2013" name="G3 (Bethesda)">
        <title>Genomes of Ashbya fungi isolated from insects reveal four mating-type loci, numerous translocations, lack of transposons, and distinct gene duplications.</title>
        <authorList>
            <person name="Dietrich F.S."/>
            <person name="Voegeli S."/>
            <person name="Kuo S."/>
            <person name="Philippsen P."/>
        </authorList>
    </citation>
    <scope>GENOME REANNOTATION</scope>
    <source>
        <strain>ATCC 10895 / CBS 109.51 / FGSC 9923 / NRRL Y-1056</strain>
    </source>
</reference>
<organism>
    <name type="scientific">Eremothecium gossypii (strain ATCC 10895 / CBS 109.51 / FGSC 9923 / NRRL Y-1056)</name>
    <name type="common">Yeast</name>
    <name type="synonym">Ashbya gossypii</name>
    <dbReference type="NCBI Taxonomy" id="284811"/>
    <lineage>
        <taxon>Eukaryota</taxon>
        <taxon>Fungi</taxon>
        <taxon>Dikarya</taxon>
        <taxon>Ascomycota</taxon>
        <taxon>Saccharomycotina</taxon>
        <taxon>Saccharomycetes</taxon>
        <taxon>Saccharomycetales</taxon>
        <taxon>Saccharomycetaceae</taxon>
        <taxon>Eremothecium</taxon>
    </lineage>
</organism>
<protein>
    <recommendedName>
        <fullName>GPI-anchored wall transfer protein 1</fullName>
        <ecNumber>2.3.-.-</ecNumber>
    </recommendedName>
</protein>
<evidence type="ECO:0000250" key="1"/>
<evidence type="ECO:0000255" key="2"/>
<evidence type="ECO:0000305" key="3"/>
<dbReference type="EC" id="2.3.-.-"/>
<dbReference type="EMBL" id="AE016819">
    <property type="protein sequence ID" value="AAS53465.1"/>
    <property type="molecule type" value="Genomic_DNA"/>
</dbReference>
<dbReference type="RefSeq" id="NP_985641.1">
    <property type="nucleotide sequence ID" value="NM_210995.1"/>
</dbReference>
<dbReference type="SMR" id="Q754I2"/>
<dbReference type="FunCoup" id="Q754I2">
    <property type="interactions" value="570"/>
</dbReference>
<dbReference type="STRING" id="284811.Q754I2"/>
<dbReference type="GlyCosmos" id="Q754I2">
    <property type="glycosylation" value="1 site, No reported glycans"/>
</dbReference>
<dbReference type="EnsemblFungi" id="AAS53465">
    <property type="protein sequence ID" value="AAS53465"/>
    <property type="gene ID" value="AGOS_AFR094C"/>
</dbReference>
<dbReference type="GeneID" id="4621884"/>
<dbReference type="KEGG" id="ago:AGOS_AFR094C"/>
<dbReference type="eggNOG" id="KOG0411">
    <property type="taxonomic scope" value="Eukaryota"/>
</dbReference>
<dbReference type="HOGENOM" id="CLU_020802_2_2_1"/>
<dbReference type="InParanoid" id="Q754I2"/>
<dbReference type="OMA" id="GLYVMQP"/>
<dbReference type="OrthoDB" id="15270at2759"/>
<dbReference type="UniPathway" id="UPA00196"/>
<dbReference type="Proteomes" id="UP000000591">
    <property type="component" value="Chromosome VI"/>
</dbReference>
<dbReference type="GO" id="GO:0005789">
    <property type="term" value="C:endoplasmic reticulum membrane"/>
    <property type="evidence" value="ECO:0007669"/>
    <property type="project" value="UniProtKB-SubCell"/>
</dbReference>
<dbReference type="GO" id="GO:0032216">
    <property type="term" value="F:glucosaminyl-phosphatidylinositol O-acyltransferase activity"/>
    <property type="evidence" value="ECO:0000318"/>
    <property type="project" value="GO_Central"/>
</dbReference>
<dbReference type="GO" id="GO:0006506">
    <property type="term" value="P:GPI anchor biosynthetic process"/>
    <property type="evidence" value="ECO:0000318"/>
    <property type="project" value="GO_Central"/>
</dbReference>
<dbReference type="InterPro" id="IPR009447">
    <property type="entry name" value="PIGW/GWT1"/>
</dbReference>
<dbReference type="PANTHER" id="PTHR20661">
    <property type="entry name" value="PHOSPHATIDYLINOSITOL-GLYCAN BIOSYNTHESIS CLASS W PROTEIN"/>
    <property type="match status" value="1"/>
</dbReference>
<dbReference type="PANTHER" id="PTHR20661:SF0">
    <property type="entry name" value="PHOSPHATIDYLINOSITOL-GLYCAN BIOSYNTHESIS CLASS W PROTEIN"/>
    <property type="match status" value="1"/>
</dbReference>
<dbReference type="Pfam" id="PF06423">
    <property type="entry name" value="GWT1"/>
    <property type="match status" value="1"/>
</dbReference>
<dbReference type="PIRSF" id="PIRSF017321">
    <property type="entry name" value="GWT1"/>
    <property type="match status" value="1"/>
</dbReference>